<name>GCSPA_BACMK</name>
<evidence type="ECO:0000255" key="1">
    <source>
        <dbReference type="HAMAP-Rule" id="MF_00712"/>
    </source>
</evidence>
<comment type="function">
    <text evidence="1">The glycine cleavage system catalyzes the degradation of glycine. The P protein binds the alpha-amino group of glycine through its pyridoxal phosphate cofactor; CO(2) is released and the remaining methylamine moiety is then transferred to the lipoamide cofactor of the H protein.</text>
</comment>
<comment type="catalytic activity">
    <reaction evidence="1">
        <text>N(6)-[(R)-lipoyl]-L-lysyl-[glycine-cleavage complex H protein] + glycine + H(+) = N(6)-[(R)-S(8)-aminomethyldihydrolipoyl]-L-lysyl-[glycine-cleavage complex H protein] + CO2</text>
        <dbReference type="Rhea" id="RHEA:24304"/>
        <dbReference type="Rhea" id="RHEA-COMP:10494"/>
        <dbReference type="Rhea" id="RHEA-COMP:10495"/>
        <dbReference type="ChEBI" id="CHEBI:15378"/>
        <dbReference type="ChEBI" id="CHEBI:16526"/>
        <dbReference type="ChEBI" id="CHEBI:57305"/>
        <dbReference type="ChEBI" id="CHEBI:83099"/>
        <dbReference type="ChEBI" id="CHEBI:83143"/>
        <dbReference type="EC" id="1.4.4.2"/>
    </reaction>
</comment>
<comment type="subunit">
    <text evidence="1">The glycine cleavage system is composed of four proteins: P, T, L and H. In this organism, the P 'protein' is a heterodimer of two subunits.</text>
</comment>
<comment type="similarity">
    <text evidence="1">Belongs to the GcvP family. N-terminal subunit subfamily.</text>
</comment>
<feature type="chain" id="PRO_1000132471" description="Probable glycine dehydrogenase (decarboxylating) subunit 1">
    <location>
        <begin position="1"/>
        <end position="447"/>
    </location>
</feature>
<protein>
    <recommendedName>
        <fullName evidence="1">Probable glycine dehydrogenase (decarboxylating) subunit 1</fullName>
        <ecNumber evidence="1">1.4.4.2</ecNumber>
    </recommendedName>
    <alternativeName>
        <fullName evidence="1">Glycine cleavage system P-protein subunit 1</fullName>
    </alternativeName>
    <alternativeName>
        <fullName evidence="1">Glycine decarboxylase subunit 1</fullName>
    </alternativeName>
    <alternativeName>
        <fullName evidence="1">Glycine dehydrogenase (aminomethyl-transferring) subunit 1</fullName>
    </alternativeName>
</protein>
<sequence>MLHRYLPMTEEDKKEMLQTIGVQTIDELFSDIPESVRFKGDLKIKEAKSEPELLKELSQMASKNANLKEYASFLGAGVYDHYAPVIVDHVISRSEFYTAYTPYQPEISQGELQAIFEFQTMICELTGMDVANSSMYDGGTALAEAAMLAAGHTRKKKILVSAAVHPESRAVLETYAKGQNLEVVEIDHKNGVTDLEVLQSEVDDTVACVIVQYPNFFGQVEKLADIEKIVHQQKSLFIVSSNPLSLGALTPPGKFGADVVIGDAQPFGIPTQFGGPHCGYFATTKAFMRKIPGRLVGQTVDSDGKRGFVLTLQAREQHIRRDKATSNICSNQALNALAASVAMTALGKQGVKEMARQNISKAQYAKRQFEAKGFTVTFAGPFFNEFVVDCKRPVKEINDVLIQKNIIGGYDLGRDYKEHENHMLVAVTELRTKEEIDTLVNEMGAIQ</sequence>
<gene>
    <name evidence="1" type="primary">gcvPA</name>
    <name type="ordered locus">BcerKBAB4_4081</name>
</gene>
<organism>
    <name type="scientific">Bacillus mycoides (strain KBAB4)</name>
    <name type="common">Bacillus weihenstephanensis</name>
    <dbReference type="NCBI Taxonomy" id="315730"/>
    <lineage>
        <taxon>Bacteria</taxon>
        <taxon>Bacillati</taxon>
        <taxon>Bacillota</taxon>
        <taxon>Bacilli</taxon>
        <taxon>Bacillales</taxon>
        <taxon>Bacillaceae</taxon>
        <taxon>Bacillus</taxon>
        <taxon>Bacillus cereus group</taxon>
    </lineage>
</organism>
<proteinExistence type="inferred from homology"/>
<accession>A9VH11</accession>
<dbReference type="EC" id="1.4.4.2" evidence="1"/>
<dbReference type="EMBL" id="CP000903">
    <property type="protein sequence ID" value="ABY45243.1"/>
    <property type="molecule type" value="Genomic_DNA"/>
</dbReference>
<dbReference type="RefSeq" id="WP_002015020.1">
    <property type="nucleotide sequence ID" value="NC_010184.1"/>
</dbReference>
<dbReference type="SMR" id="A9VH11"/>
<dbReference type="KEGG" id="bwe:BcerKBAB4_4081"/>
<dbReference type="eggNOG" id="COG0403">
    <property type="taxonomic scope" value="Bacteria"/>
</dbReference>
<dbReference type="HOGENOM" id="CLU_004620_0_2_9"/>
<dbReference type="Proteomes" id="UP000002154">
    <property type="component" value="Chromosome"/>
</dbReference>
<dbReference type="GO" id="GO:0004375">
    <property type="term" value="F:glycine dehydrogenase (decarboxylating) activity"/>
    <property type="evidence" value="ECO:0007669"/>
    <property type="project" value="UniProtKB-EC"/>
</dbReference>
<dbReference type="GO" id="GO:0019464">
    <property type="term" value="P:glycine decarboxylation via glycine cleavage system"/>
    <property type="evidence" value="ECO:0007669"/>
    <property type="project" value="UniProtKB-UniRule"/>
</dbReference>
<dbReference type="GO" id="GO:0009116">
    <property type="term" value="P:nucleoside metabolic process"/>
    <property type="evidence" value="ECO:0007669"/>
    <property type="project" value="InterPro"/>
</dbReference>
<dbReference type="CDD" id="cd00613">
    <property type="entry name" value="GDC-P"/>
    <property type="match status" value="1"/>
</dbReference>
<dbReference type="FunFam" id="3.40.640.10:FF:000113">
    <property type="entry name" value="Probable glycine dehydrogenase (decarboxylating) subunit 1"/>
    <property type="match status" value="1"/>
</dbReference>
<dbReference type="Gene3D" id="3.90.1150.10">
    <property type="entry name" value="Aspartate Aminotransferase, domain 1"/>
    <property type="match status" value="1"/>
</dbReference>
<dbReference type="Gene3D" id="3.40.640.10">
    <property type="entry name" value="Type I PLP-dependent aspartate aminotransferase-like (Major domain)"/>
    <property type="match status" value="1"/>
</dbReference>
<dbReference type="HAMAP" id="MF_00712">
    <property type="entry name" value="GcvPA"/>
    <property type="match status" value="1"/>
</dbReference>
<dbReference type="InterPro" id="IPR023010">
    <property type="entry name" value="GcvPA"/>
</dbReference>
<dbReference type="InterPro" id="IPR049315">
    <property type="entry name" value="GDC-P_N"/>
</dbReference>
<dbReference type="InterPro" id="IPR020581">
    <property type="entry name" value="GDC_P"/>
</dbReference>
<dbReference type="InterPro" id="IPR015424">
    <property type="entry name" value="PyrdxlP-dep_Trfase"/>
</dbReference>
<dbReference type="InterPro" id="IPR015421">
    <property type="entry name" value="PyrdxlP-dep_Trfase_major"/>
</dbReference>
<dbReference type="InterPro" id="IPR015422">
    <property type="entry name" value="PyrdxlP-dep_Trfase_small"/>
</dbReference>
<dbReference type="NCBIfam" id="NF001696">
    <property type="entry name" value="PRK00451.1"/>
    <property type="match status" value="1"/>
</dbReference>
<dbReference type="PANTHER" id="PTHR42806">
    <property type="entry name" value="GLYCINE CLEAVAGE SYSTEM P-PROTEIN"/>
    <property type="match status" value="1"/>
</dbReference>
<dbReference type="PANTHER" id="PTHR42806:SF1">
    <property type="entry name" value="GLYCINE DEHYDROGENASE (DECARBOXYLATING)"/>
    <property type="match status" value="1"/>
</dbReference>
<dbReference type="Pfam" id="PF02347">
    <property type="entry name" value="GDC-P"/>
    <property type="match status" value="1"/>
</dbReference>
<dbReference type="PIRSF" id="PIRSF006815">
    <property type="entry name" value="GcvPA"/>
    <property type="match status" value="1"/>
</dbReference>
<dbReference type="SUPFAM" id="SSF53383">
    <property type="entry name" value="PLP-dependent transferases"/>
    <property type="match status" value="1"/>
</dbReference>
<reference key="1">
    <citation type="journal article" date="2008" name="Chem. Biol. Interact.">
        <title>Extending the Bacillus cereus group genomics to putative food-borne pathogens of different toxicity.</title>
        <authorList>
            <person name="Lapidus A."/>
            <person name="Goltsman E."/>
            <person name="Auger S."/>
            <person name="Galleron N."/>
            <person name="Segurens B."/>
            <person name="Dossat C."/>
            <person name="Land M.L."/>
            <person name="Broussolle V."/>
            <person name="Brillard J."/>
            <person name="Guinebretiere M.-H."/>
            <person name="Sanchis V."/>
            <person name="Nguen-the C."/>
            <person name="Lereclus D."/>
            <person name="Richardson P."/>
            <person name="Wincker P."/>
            <person name="Weissenbach J."/>
            <person name="Ehrlich S.D."/>
            <person name="Sorokin A."/>
        </authorList>
    </citation>
    <scope>NUCLEOTIDE SEQUENCE [LARGE SCALE GENOMIC DNA]</scope>
    <source>
        <strain>KBAB4</strain>
    </source>
</reference>
<keyword id="KW-0560">Oxidoreductase</keyword>